<evidence type="ECO:0000250" key="1"/>
<evidence type="ECO:0000250" key="2">
    <source>
        <dbReference type="UniProtKB" id="G3UW82"/>
    </source>
</evidence>
<evidence type="ECO:0000250" key="3">
    <source>
        <dbReference type="UniProtKB" id="P12883"/>
    </source>
</evidence>
<evidence type="ECO:0000250" key="4">
    <source>
        <dbReference type="UniProtKB" id="Q28641"/>
    </source>
</evidence>
<evidence type="ECO:0000250" key="5">
    <source>
        <dbReference type="UniProtKB" id="Q29RW1"/>
    </source>
</evidence>
<evidence type="ECO:0000250" key="6">
    <source>
        <dbReference type="UniProtKB" id="Q9UKX2"/>
    </source>
</evidence>
<evidence type="ECO:0000255" key="7"/>
<evidence type="ECO:0000255" key="8">
    <source>
        <dbReference type="PROSITE-ProRule" id="PRU00116"/>
    </source>
</evidence>
<evidence type="ECO:0000255" key="9">
    <source>
        <dbReference type="PROSITE-ProRule" id="PRU00782"/>
    </source>
</evidence>
<evidence type="ECO:0000255" key="10">
    <source>
        <dbReference type="PROSITE-ProRule" id="PRU01190"/>
    </source>
</evidence>
<evidence type="ECO:0000256" key="11">
    <source>
        <dbReference type="SAM" id="MobiDB-lite"/>
    </source>
</evidence>
<evidence type="ECO:0000305" key="12"/>
<name>MYH2_BOVIN</name>
<gene>
    <name type="primary">MYH2</name>
</gene>
<reference key="1">
    <citation type="journal article" date="2004" name="Meat Sci.">
        <title>Myosin heavy chain isoforms expressed in bovine skeletal muscles.</title>
        <authorList>
            <person name="Chikuni K."/>
            <person name="Muroya S."/>
            <person name="Nakajima I."/>
        </authorList>
        <dbReference type="AGRICOLA" id="IND43619651"/>
    </citation>
    <scope>NUCLEOTIDE SEQUENCE [MRNA]</scope>
    <source>
        <strain>Holstein</strain>
        <tissue>Skeletal muscle</tissue>
    </source>
</reference>
<protein>
    <recommendedName>
        <fullName evidence="12">Myosin-2</fullName>
    </recommendedName>
    <alternativeName>
        <fullName>Myosin heavy chain 2</fullName>
    </alternativeName>
    <alternativeName>
        <fullName>Myosin heavy chain 2a</fullName>
        <shortName>MyHC-2a</shortName>
    </alternativeName>
    <alternativeName>
        <fullName>Myosin heavy chain, skeletal muscle, adult 2</fullName>
    </alternativeName>
</protein>
<dbReference type="EMBL" id="AB059398">
    <property type="protein sequence ID" value="BAB40920.1"/>
    <property type="molecule type" value="mRNA"/>
</dbReference>
<dbReference type="SMR" id="Q9BE41"/>
<dbReference type="FunCoup" id="Q9BE41">
    <property type="interactions" value="77"/>
</dbReference>
<dbReference type="STRING" id="9913.ENSBTAP00000012797"/>
<dbReference type="BindingDB" id="Q9BE41"/>
<dbReference type="ChEMBL" id="CHEMBL4680039"/>
<dbReference type="PaxDb" id="9913-ENSBTAP00000012797"/>
<dbReference type="ABCD" id="Q9BE41">
    <property type="antibodies" value="1 sequenced antibody"/>
</dbReference>
<dbReference type="eggNOG" id="KOG0161">
    <property type="taxonomic scope" value="Eukaryota"/>
</dbReference>
<dbReference type="InParanoid" id="Q9BE41"/>
<dbReference type="OrthoDB" id="312459at2759"/>
<dbReference type="Proteomes" id="UP000009136">
    <property type="component" value="Unplaced"/>
</dbReference>
<dbReference type="GO" id="GO:0005737">
    <property type="term" value="C:cytoplasm"/>
    <property type="evidence" value="ECO:0000318"/>
    <property type="project" value="GO_Central"/>
</dbReference>
<dbReference type="GO" id="GO:0030016">
    <property type="term" value="C:myofibril"/>
    <property type="evidence" value="ECO:0000314"/>
    <property type="project" value="CAFA"/>
</dbReference>
<dbReference type="GO" id="GO:0032982">
    <property type="term" value="C:myosin filament"/>
    <property type="evidence" value="ECO:0000318"/>
    <property type="project" value="GO_Central"/>
</dbReference>
<dbReference type="GO" id="GO:0016460">
    <property type="term" value="C:myosin II complex"/>
    <property type="evidence" value="ECO:0000318"/>
    <property type="project" value="GO_Central"/>
</dbReference>
<dbReference type="GO" id="GO:0030017">
    <property type="term" value="C:sarcomere"/>
    <property type="evidence" value="ECO:0000314"/>
    <property type="project" value="CAFA"/>
</dbReference>
<dbReference type="GO" id="GO:0051015">
    <property type="term" value="F:actin filament binding"/>
    <property type="evidence" value="ECO:0000318"/>
    <property type="project" value="GO_Central"/>
</dbReference>
<dbReference type="GO" id="GO:0005524">
    <property type="term" value="F:ATP binding"/>
    <property type="evidence" value="ECO:0007669"/>
    <property type="project" value="UniProtKB-KW"/>
</dbReference>
<dbReference type="GO" id="GO:0005516">
    <property type="term" value="F:calmodulin binding"/>
    <property type="evidence" value="ECO:0007669"/>
    <property type="project" value="UniProtKB-KW"/>
</dbReference>
<dbReference type="GO" id="GO:0000146">
    <property type="term" value="F:microfilament motor activity"/>
    <property type="evidence" value="ECO:0000318"/>
    <property type="project" value="GO_Central"/>
</dbReference>
<dbReference type="GO" id="GO:0006936">
    <property type="term" value="P:muscle contraction"/>
    <property type="evidence" value="ECO:0000318"/>
    <property type="project" value="GO_Central"/>
</dbReference>
<dbReference type="FunFam" id="1.10.10.820:FF:000001">
    <property type="entry name" value="Myosin heavy chain"/>
    <property type="match status" value="1"/>
</dbReference>
<dbReference type="FunFam" id="1.20.5.340:FF:000002">
    <property type="entry name" value="Myosin heavy chain"/>
    <property type="match status" value="1"/>
</dbReference>
<dbReference type="FunFam" id="1.20.5.340:FF:000003">
    <property type="entry name" value="Myosin heavy chain"/>
    <property type="match status" value="1"/>
</dbReference>
<dbReference type="FunFam" id="1.20.5.340:FF:000004">
    <property type="entry name" value="Myosin heavy chain"/>
    <property type="match status" value="1"/>
</dbReference>
<dbReference type="FunFam" id="1.20.5.340:FF:000006">
    <property type="entry name" value="Myosin heavy chain"/>
    <property type="match status" value="1"/>
</dbReference>
<dbReference type="FunFam" id="1.20.5.340:FF:000013">
    <property type="entry name" value="Myosin heavy chain"/>
    <property type="match status" value="1"/>
</dbReference>
<dbReference type="FunFam" id="1.20.5.370:FF:000001">
    <property type="entry name" value="Myosin heavy chain"/>
    <property type="match status" value="1"/>
</dbReference>
<dbReference type="FunFam" id="1.20.5.370:FF:000002">
    <property type="entry name" value="Myosin heavy chain"/>
    <property type="match status" value="1"/>
</dbReference>
<dbReference type="FunFam" id="1.20.5.370:FF:000003">
    <property type="entry name" value="Myosin heavy chain"/>
    <property type="match status" value="1"/>
</dbReference>
<dbReference type="FunFam" id="1.20.5.370:FF:000007">
    <property type="entry name" value="Myosin heavy chain"/>
    <property type="match status" value="1"/>
</dbReference>
<dbReference type="FunFam" id="1.20.5.370:FF:000008">
    <property type="entry name" value="Myosin heavy chain"/>
    <property type="match status" value="1"/>
</dbReference>
<dbReference type="FunFam" id="1.20.5.4820:FF:000001">
    <property type="entry name" value="Myosin heavy chain"/>
    <property type="match status" value="1"/>
</dbReference>
<dbReference type="FunFam" id="1.20.58.530:FF:000001">
    <property type="entry name" value="Myosin heavy chain"/>
    <property type="match status" value="1"/>
</dbReference>
<dbReference type="FunFam" id="2.30.30.360:FF:000001">
    <property type="entry name" value="Myosin heavy chain"/>
    <property type="match status" value="1"/>
</dbReference>
<dbReference type="FunFam" id="3.40.850.10:FF:000024">
    <property type="entry name" value="Myosin heavy chain, isoform J"/>
    <property type="match status" value="1"/>
</dbReference>
<dbReference type="FunFam" id="1.20.120.720:FF:000001">
    <property type="entry name" value="Myosin heavy chain, muscle"/>
    <property type="match status" value="1"/>
</dbReference>
<dbReference type="Gene3D" id="1.10.10.820">
    <property type="match status" value="1"/>
</dbReference>
<dbReference type="Gene3D" id="1.20.5.340">
    <property type="match status" value="5"/>
</dbReference>
<dbReference type="Gene3D" id="1.20.5.370">
    <property type="match status" value="4"/>
</dbReference>
<dbReference type="Gene3D" id="1.20.5.4820">
    <property type="match status" value="1"/>
</dbReference>
<dbReference type="Gene3D" id="1.20.58.530">
    <property type="match status" value="1"/>
</dbReference>
<dbReference type="Gene3D" id="6.10.250.2420">
    <property type="match status" value="1"/>
</dbReference>
<dbReference type="Gene3D" id="3.40.850.10">
    <property type="entry name" value="Kinesin motor domain"/>
    <property type="match status" value="1"/>
</dbReference>
<dbReference type="Gene3D" id="2.30.30.360">
    <property type="entry name" value="Myosin S1 fragment, N-terminal"/>
    <property type="match status" value="1"/>
</dbReference>
<dbReference type="Gene3D" id="1.20.120.720">
    <property type="entry name" value="Myosin VI head, motor domain, U50 subdomain"/>
    <property type="match status" value="1"/>
</dbReference>
<dbReference type="InterPro" id="IPR036961">
    <property type="entry name" value="Kinesin_motor_dom_sf"/>
</dbReference>
<dbReference type="InterPro" id="IPR001609">
    <property type="entry name" value="Myosin_head_motor_dom-like"/>
</dbReference>
<dbReference type="InterPro" id="IPR004009">
    <property type="entry name" value="Myosin_N"/>
</dbReference>
<dbReference type="InterPro" id="IPR008989">
    <property type="entry name" value="Myosin_S1_N"/>
</dbReference>
<dbReference type="InterPro" id="IPR002928">
    <property type="entry name" value="Myosin_tail"/>
</dbReference>
<dbReference type="InterPro" id="IPR027417">
    <property type="entry name" value="P-loop_NTPase"/>
</dbReference>
<dbReference type="InterPro" id="IPR014751">
    <property type="entry name" value="XRCC4-like_C"/>
</dbReference>
<dbReference type="PANTHER" id="PTHR45615">
    <property type="entry name" value="MYOSIN HEAVY CHAIN, NON-MUSCLE"/>
    <property type="match status" value="1"/>
</dbReference>
<dbReference type="PANTHER" id="PTHR45615:SF39">
    <property type="entry name" value="MYOSIN-2"/>
    <property type="match status" value="1"/>
</dbReference>
<dbReference type="Pfam" id="PF00063">
    <property type="entry name" value="Myosin_head"/>
    <property type="match status" value="1"/>
</dbReference>
<dbReference type="Pfam" id="PF02736">
    <property type="entry name" value="Myosin_N"/>
    <property type="match status" value="1"/>
</dbReference>
<dbReference type="Pfam" id="PF01576">
    <property type="entry name" value="Myosin_tail_1"/>
    <property type="match status" value="1"/>
</dbReference>
<dbReference type="PRINTS" id="PR00193">
    <property type="entry name" value="MYOSINHEAVY"/>
</dbReference>
<dbReference type="SMART" id="SM00242">
    <property type="entry name" value="MYSc"/>
    <property type="match status" value="1"/>
</dbReference>
<dbReference type="SUPFAM" id="SSF90257">
    <property type="entry name" value="Myosin rod fragments"/>
    <property type="match status" value="5"/>
</dbReference>
<dbReference type="SUPFAM" id="SSF52540">
    <property type="entry name" value="P-loop containing nucleoside triphosphate hydrolases"/>
    <property type="match status" value="1"/>
</dbReference>
<dbReference type="SUPFAM" id="SSF57997">
    <property type="entry name" value="Tropomyosin"/>
    <property type="match status" value="1"/>
</dbReference>
<dbReference type="PROSITE" id="PS50096">
    <property type="entry name" value="IQ"/>
    <property type="match status" value="1"/>
</dbReference>
<dbReference type="PROSITE" id="PS51456">
    <property type="entry name" value="MYOSIN_MOTOR"/>
    <property type="match status" value="1"/>
</dbReference>
<dbReference type="PROSITE" id="PS51844">
    <property type="entry name" value="SH3_LIKE"/>
    <property type="match status" value="1"/>
</dbReference>
<accession>Q9BE41</accession>
<comment type="function">
    <text evidence="3">Myosins are actin-based motor molecules with ATPase activity essential for muscle contraction.</text>
</comment>
<comment type="subunit">
    <text evidence="6 12">Muscle myosin is a hexameric protein that consists of 2 heavy chain subunits (MHC), 2 alkali light chain subunits (MLC) and 2 regulatory light chain subunits (MLC-2) (Probable). Interacts with GCSAM (By similarity).</text>
</comment>
<comment type="subcellular location">
    <subcellularLocation>
        <location evidence="2">Cytoplasm</location>
        <location evidence="2">Myofibril</location>
    </subcellularLocation>
    <text evidence="1">Thick filaments of the myofibrils.</text>
</comment>
<comment type="domain">
    <text>The rodlike tail sequence is highly repetitive, showing cycles of a 28-residue repeat pattern composed of 4 heptapeptides, characteristic for alpha-helical coiled coils.</text>
</comment>
<comment type="domain">
    <text evidence="12">Limited proteolysis of myosin heavy chain produces 1 light meromyosin (LMM) and 1 heavy meromyosin (HMM). HMM can be further cleaved into 2 globular subfragments (S1) and 1 rod-shaped subfragment (S2).</text>
</comment>
<comment type="similarity">
    <text evidence="12">Belongs to the TRAFAC class myosin-kinesin ATPase superfamily. Myosin family.</text>
</comment>
<comment type="caution">
    <text evidence="12">Represents a conventional myosin. This protein should not be confused with the unconventional myosin-2 (MYO2) found in fungi.</text>
</comment>
<organism>
    <name type="scientific">Bos taurus</name>
    <name type="common">Bovine</name>
    <dbReference type="NCBI Taxonomy" id="9913"/>
    <lineage>
        <taxon>Eukaryota</taxon>
        <taxon>Metazoa</taxon>
        <taxon>Chordata</taxon>
        <taxon>Craniata</taxon>
        <taxon>Vertebrata</taxon>
        <taxon>Euteleostomi</taxon>
        <taxon>Mammalia</taxon>
        <taxon>Eutheria</taxon>
        <taxon>Laurasiatheria</taxon>
        <taxon>Artiodactyla</taxon>
        <taxon>Ruminantia</taxon>
        <taxon>Pecora</taxon>
        <taxon>Bovidae</taxon>
        <taxon>Bovinae</taxon>
        <taxon>Bos</taxon>
    </lineage>
</organism>
<feature type="chain" id="PRO_0000274165" description="Myosin-2">
    <location>
        <begin position="1"/>
        <end position="1940"/>
    </location>
</feature>
<feature type="domain" description="Myosin N-terminal SH3-like" evidence="10">
    <location>
        <begin position="33"/>
        <end position="82"/>
    </location>
</feature>
<feature type="domain" description="Myosin motor" evidence="9">
    <location>
        <begin position="86"/>
        <end position="783"/>
    </location>
</feature>
<feature type="domain" description="IQ" evidence="8">
    <location>
        <begin position="786"/>
        <end position="815"/>
    </location>
</feature>
<feature type="region of interest" description="Actin-binding" evidence="1">
    <location>
        <begin position="660"/>
        <end position="682"/>
    </location>
</feature>
<feature type="region of interest" description="Actin-binding" evidence="1">
    <location>
        <begin position="762"/>
        <end position="776"/>
    </location>
</feature>
<feature type="region of interest" description="Disordered" evidence="11">
    <location>
        <begin position="1886"/>
        <end position="1905"/>
    </location>
</feature>
<feature type="coiled-coil region" evidence="7">
    <location>
        <begin position="844"/>
        <end position="1940"/>
    </location>
</feature>
<feature type="binding site" evidence="7">
    <location>
        <begin position="179"/>
        <end position="186"/>
    </location>
    <ligand>
        <name>ATP</name>
        <dbReference type="ChEBI" id="CHEBI:30616"/>
    </ligand>
</feature>
<feature type="modified residue" description="Phosphothreonine" evidence="5">
    <location>
        <position position="64"/>
    </location>
</feature>
<feature type="modified residue" description="Phosphothreonine" evidence="5">
    <location>
        <position position="69"/>
    </location>
</feature>
<feature type="modified residue" description="N6,N6,N6-trimethyllysine" evidence="7">
    <location>
        <position position="130"/>
    </location>
</feature>
<feature type="modified residue" description="Phosphotyrosine" evidence="5">
    <location>
        <position position="389"/>
    </location>
</feature>
<feature type="modified residue" description="Phosphoserine" evidence="5">
    <location>
        <position position="392"/>
    </location>
</feature>
<feature type="modified residue" description="Phosphothreonine" evidence="5">
    <location>
        <position position="419"/>
    </location>
</feature>
<feature type="modified residue" description="Phosphoserine" evidence="5">
    <location>
        <position position="625"/>
    </location>
</feature>
<feature type="modified residue" description="Pros-methylhistidine" evidence="4">
    <location>
        <position position="758"/>
    </location>
</feature>
<feature type="modified residue" description="Phosphoserine" evidence="5">
    <location>
        <position position="1093"/>
    </location>
</feature>
<feature type="modified residue" description="Phosphoserine" evidence="5">
    <location>
        <position position="1097"/>
    </location>
</feature>
<feature type="modified residue" description="Phosphoserine" evidence="5">
    <location>
        <position position="1163"/>
    </location>
</feature>
<feature type="modified residue" description="Phosphoserine" evidence="5">
    <location>
        <position position="1238"/>
    </location>
</feature>
<feature type="modified residue" description="Phosphothreonine" evidence="5">
    <location>
        <position position="1242"/>
    </location>
</feature>
<feature type="modified residue" description="Phosphoserine" evidence="5">
    <location>
        <position position="1244"/>
    </location>
</feature>
<feature type="modified residue" description="Phosphothreonine" evidence="5">
    <location>
        <position position="1256"/>
    </location>
</feature>
<feature type="modified residue" description="Phosphothreonine" evidence="5">
    <location>
        <position position="1287"/>
    </location>
</feature>
<feature type="modified residue" description="Phosphoserine" evidence="5">
    <location>
        <position position="1289"/>
    </location>
</feature>
<feature type="modified residue" description="Phosphoserine" evidence="5">
    <location>
        <position position="1293"/>
    </location>
</feature>
<feature type="modified residue" description="Phosphoserine" evidence="5">
    <location>
        <position position="1304"/>
    </location>
</feature>
<feature type="modified residue" description="Phosphoserine" evidence="5">
    <location>
        <position position="1307"/>
    </location>
</feature>
<feature type="modified residue" description="Phosphotyrosine" evidence="5">
    <location>
        <position position="1465"/>
    </location>
</feature>
<feature type="modified residue" description="Phosphothreonine" evidence="5">
    <location>
        <position position="1468"/>
    </location>
</feature>
<feature type="modified residue" description="Phosphotyrosine" evidence="5">
    <location>
        <position position="1493"/>
    </location>
</feature>
<feature type="modified residue" description="Phosphoserine" evidence="5">
    <location>
        <position position="1496"/>
    </location>
</feature>
<feature type="modified residue" description="Phosphothreonine" evidence="5">
    <location>
        <position position="1502"/>
    </location>
</feature>
<feature type="modified residue" description="Phosphoserine" evidence="5">
    <location>
        <position position="1515"/>
    </location>
</feature>
<feature type="modified residue" description="Phosphothreonine" evidence="5">
    <location>
        <position position="1518"/>
    </location>
</feature>
<feature type="modified residue" description="Phosphoserine" evidence="5">
    <location>
        <position position="1543"/>
    </location>
</feature>
<feature type="modified residue" description="Phosphoserine" evidence="5">
    <location>
        <position position="1555"/>
    </location>
</feature>
<feature type="modified residue" description="Phosphoserine" evidence="5">
    <location>
        <position position="1575"/>
    </location>
</feature>
<feature type="modified residue" description="Phosphoserine" evidence="5">
    <location>
        <position position="1601"/>
    </location>
</feature>
<feature type="modified residue" description="Phosphoserine" evidence="5">
    <location>
        <position position="1715"/>
    </location>
</feature>
<feature type="modified residue" description="Phosphoserine" evidence="5">
    <location>
        <position position="1727"/>
    </location>
</feature>
<feature type="modified residue" description="Phosphothreonine" evidence="5">
    <location>
        <position position="1731"/>
    </location>
</feature>
<feature type="modified residue" description="Phosphothreonine" evidence="5">
    <location>
        <position position="1737"/>
    </location>
</feature>
<keyword id="KW-0009">Actin-binding</keyword>
<keyword id="KW-0067">ATP-binding</keyword>
<keyword id="KW-0112">Calmodulin-binding</keyword>
<keyword id="KW-0175">Coiled coil</keyword>
<keyword id="KW-0963">Cytoplasm</keyword>
<keyword id="KW-0488">Methylation</keyword>
<keyword id="KW-0505">Motor protein</keyword>
<keyword id="KW-0514">Muscle protein</keyword>
<keyword id="KW-0518">Myosin</keyword>
<keyword id="KW-0547">Nucleotide-binding</keyword>
<keyword id="KW-0597">Phosphoprotein</keyword>
<keyword id="KW-1185">Reference proteome</keyword>
<keyword id="KW-0787">Thick filament</keyword>
<sequence>MSSDQEMAIFGEAAPYLRKSEKERIEAQNKPFDAKTSVFVAEPKESFVKGTIQSREGGKVTVKTEGGATLTVKEDQVFPMNPPKFDKIEDMAMMTHLHEPAVLYNLKERYAAWMIYTYSGLFCVTVNPYKWLPVYNPEVVTAYRGKKRQEAPPHIFSISDNAYQFMLTDRENQSILITGESGAGKTVNTKRVIQYFATIAVTGDKKKEEITSGKIQGTLEDQIISANPLLEAFGNAKTVRNDNSSRFGKFIRIHFGTTGKLASADIETYLLEKSRVTFQLKAERSYHIFYQITSNRKPELIEMLLITTNPYDYPFISQGEISVASIDDQEELIATDSAIDILGFTNEEKVSIYKLTGAVMHYGNLKFKQKQREEQAEPDGTEVADKAAYLQSLNSADLLKALCYPRVKVGNEYVTKGQTVEQVTNAVGALAKAVYEKMFLWMVARINQQLDTKQPRQYFIGVLDIAGFEIFDFNSLEQLCINFTNEKLQQFFNHHMFVLEQEEYKREGIEWTFIDFGMDLAACIELIEKPMGIFSILEEECMFPKATDMSFKNKLYDQHLGKSANFQKPKVVKGKPEAHFALIHYAGVVDYNITGWLEKNKDPLNDTVVGLYQKSALKTLAFLFSGTPTGDSEASGGTKKGGKKKGSSFQTVSALFRENLNKLMTNLRSTHPHFVRCIIPNETKTPGAMEHELVLHQLRCNGVLEGIRICRKGFPSRILYADFKQRYKVLNASAIPEGQYIDSKKASEKLLASIDIDHTQYKFGHTKVFFKAGLLGLLEEMRDEKLAQLMTRTQARCRGFLARVEYQKMVERRESIFCIQYNIRAFMNVKHWPWMKLFFRIKPLLKSAETEKEMATMKEEFQKTKDELAKSEAKRKELEEKMVTLLKEKNDLQLQVQSEAEGLADAEERCDQLIKTKIQLEAKIKEVTERAEDEEEINAELTAKKRKLEDECSELKKDIDDLELTLAKVEKEKHATENKVKNLTEEMAGLDETIAKLTKEKKALQEAHQQTLDDLQAEEDKVNTLTKAKTKLEQQVDDLEGSLEQEKKLRMDLERAKRKLEGDLKLAQESIMDIENEKQQLDEKLKKKEFEISNLQSKIEDEQALGIQLQKKIKELQARIEELEEEIEAERASRAKAEKQRSDLSRELEEISERLEEAGGATSAQIEMNKKREAEFQKMRRDLEEATLQHEATAAALRKKHADSVAELGEQIDNLQRVKQKLEKEKSEMKMEIDDLASNVETISKAKGNLEKMCRTLEDQVNELKSKEEEQQRLINDLTTQRGRLQTESGEFSRQLDEKEALVSQLSRGKQAFTQQIEELKRQLEEEIKAKNALAHGLQSARHDCDLLREQYEEEQESKAELQRALSKANTEVAQWRTKYETDAIQRTEELEEAKKKLAQRLQAAEEHVEAVNAKCASLEKTKQRLQNEVEDLMLDVERTNAACAALDKKQRNFDKILAEWKQKYEETHAELEAAQKEARSLGTELFKMKNAYEESLDQLETLKRENKNLQQEISDLTEQIAEGGKRMHELEKIKKQVEQEKSEIQAALEEAEASLEHEEGKILRIQLELNQVKSEIDRKIAEKDEEIDQLKRNHIRVVESMQTMLDAEIRSRNDAIRLKKKMEGDLNEMEIQLNHANRMAAEALKNYRNTQAILKDTQIHLDDALRGQEDLKEQLAMVERRANLLQAEIEELRATLEQTERSRKIAEQELLDASERVQLLHTQNTSLINTKKKLETDITQIQGEMEDILQEARNAEEKAKKAITDAAMMAEELKKEQDTSAHLERMKKNMEQTVKDLQNRLDEAEQLALKGGKKQIQKLEARVRELEGEVESEQKRNVEAVKGLRKHERRVKELTYQTEEDRKNILRLQDLVDKLQAKVKSYKRQAEEAEEQSNTNLSKFRKLQHELEEAEERADIAESQVNKLRVKSREVHTKIISEE</sequence>
<proteinExistence type="evidence at transcript level"/>